<feature type="chain" id="PRO_0000292032" description="Protein N-lysine methyltransferase METTL21A">
    <location>
        <begin position="1"/>
        <end position="218"/>
    </location>
</feature>
<feature type="binding site" evidence="1">
    <location>
        <position position="47"/>
    </location>
    <ligand>
        <name>S-adenosyl-L-methionine</name>
        <dbReference type="ChEBI" id="CHEBI:59789"/>
    </ligand>
</feature>
<feature type="binding site" evidence="1">
    <location>
        <begin position="73"/>
        <end position="75"/>
    </location>
    <ligand>
        <name>S-adenosyl-L-methionine</name>
        <dbReference type="ChEBI" id="CHEBI:59789"/>
    </ligand>
</feature>
<feature type="binding site" evidence="1">
    <location>
        <position position="94"/>
    </location>
    <ligand>
        <name>S-adenosyl-L-methionine</name>
        <dbReference type="ChEBI" id="CHEBI:59789"/>
    </ligand>
</feature>
<feature type="binding site" evidence="1">
    <location>
        <position position="125"/>
    </location>
    <ligand>
        <name>S-adenosyl-L-methionine</name>
        <dbReference type="ChEBI" id="CHEBI:59789"/>
    </ligand>
</feature>
<feature type="binding site" evidence="1">
    <location>
        <position position="143"/>
    </location>
    <ligand>
        <name>S-adenosyl-L-methionine</name>
        <dbReference type="ChEBI" id="CHEBI:59789"/>
    </ligand>
</feature>
<comment type="function">
    <text evidence="1">Protein-lysine methyltransferase that selectively trimethylates residues in heat shock protein 70 (HSP70) family members. Contributes to the in vivo trimethylation of Lys residues in HSPA1 and HSPA8. In vitro methylates 'Lys-561' in HSPA1, 'Lys-564' in HSPA2, 'Lys-585' in HSPA5, 'Lys-563' in HSPA6 and 'Lys-561' in HSPA8.</text>
</comment>
<comment type="catalytic activity">
    <reaction evidence="1">
        <text>L-lysyl-[protein] + 3 S-adenosyl-L-methionine = N(6),N(6),N(6)-trimethyl-L-lysyl-[protein] + 3 S-adenosyl-L-homocysteine + 3 H(+)</text>
        <dbReference type="Rhea" id="RHEA:54192"/>
        <dbReference type="Rhea" id="RHEA-COMP:9752"/>
        <dbReference type="Rhea" id="RHEA-COMP:13826"/>
        <dbReference type="ChEBI" id="CHEBI:15378"/>
        <dbReference type="ChEBI" id="CHEBI:29969"/>
        <dbReference type="ChEBI" id="CHEBI:57856"/>
        <dbReference type="ChEBI" id="CHEBI:59789"/>
        <dbReference type="ChEBI" id="CHEBI:61961"/>
    </reaction>
    <physiologicalReaction direction="left-to-right" evidence="1">
        <dbReference type="Rhea" id="RHEA:54193"/>
    </physiologicalReaction>
</comment>
<comment type="subunit">
    <text evidence="1">Interacts with heat shock 70 family members; at least some of these proteins are methylation substrates.</text>
</comment>
<comment type="subcellular location">
    <subcellularLocation>
        <location evidence="1">Cytoplasm</location>
    </subcellularLocation>
</comment>
<comment type="similarity">
    <text evidence="2">Belongs to the methyltransferase superfamily. METTL21 family.</text>
</comment>
<proteinExistence type="evidence at transcript level"/>
<gene>
    <name type="primary">METTL21A</name>
    <name type="synonym">FAM119A</name>
</gene>
<accession>A4FV42</accession>
<name>MT21A_BOVIN</name>
<organism>
    <name type="scientific">Bos taurus</name>
    <name type="common">Bovine</name>
    <dbReference type="NCBI Taxonomy" id="9913"/>
    <lineage>
        <taxon>Eukaryota</taxon>
        <taxon>Metazoa</taxon>
        <taxon>Chordata</taxon>
        <taxon>Craniata</taxon>
        <taxon>Vertebrata</taxon>
        <taxon>Euteleostomi</taxon>
        <taxon>Mammalia</taxon>
        <taxon>Eutheria</taxon>
        <taxon>Laurasiatheria</taxon>
        <taxon>Artiodactyla</taxon>
        <taxon>Ruminantia</taxon>
        <taxon>Pecora</taxon>
        <taxon>Bovidae</taxon>
        <taxon>Bovinae</taxon>
        <taxon>Bos</taxon>
    </lineage>
</organism>
<keyword id="KW-0963">Cytoplasm</keyword>
<keyword id="KW-0489">Methyltransferase</keyword>
<keyword id="KW-1185">Reference proteome</keyword>
<keyword id="KW-0949">S-adenosyl-L-methionine</keyword>
<keyword id="KW-0808">Transferase</keyword>
<protein>
    <recommendedName>
        <fullName>Protein N-lysine methyltransferase METTL21A</fullName>
        <ecNumber evidence="1">2.1.1.-</ecNumber>
    </recommendedName>
    <alternativeName>
        <fullName>Methyltransferase-like protein 21A</fullName>
    </alternativeName>
</protein>
<dbReference type="EC" id="2.1.1.-" evidence="1"/>
<dbReference type="EMBL" id="BC123706">
    <property type="protein sequence ID" value="AAI23707.1"/>
    <property type="molecule type" value="mRNA"/>
</dbReference>
<dbReference type="RefSeq" id="NP_001076987.1">
    <property type="nucleotide sequence ID" value="NM_001083518.2"/>
</dbReference>
<dbReference type="RefSeq" id="XP_005202816.1">
    <property type="nucleotide sequence ID" value="XM_005202759.5"/>
</dbReference>
<dbReference type="RefSeq" id="XP_005202817.1">
    <property type="nucleotide sequence ID" value="XM_005202760.5"/>
</dbReference>
<dbReference type="RefSeq" id="XP_010800572.1">
    <property type="nucleotide sequence ID" value="XM_010802270.2"/>
</dbReference>
<dbReference type="RefSeq" id="XP_024833725.1">
    <property type="nucleotide sequence ID" value="XM_024977957.2"/>
</dbReference>
<dbReference type="SMR" id="A4FV42"/>
<dbReference type="FunCoup" id="A4FV42">
    <property type="interactions" value="2382"/>
</dbReference>
<dbReference type="STRING" id="9913.ENSBTAP00000071118"/>
<dbReference type="PaxDb" id="9913-ENSBTAP00000007203"/>
<dbReference type="GeneID" id="615773"/>
<dbReference type="KEGG" id="bta:615773"/>
<dbReference type="CTD" id="151194"/>
<dbReference type="eggNOG" id="KOG2793">
    <property type="taxonomic scope" value="Eukaryota"/>
</dbReference>
<dbReference type="HOGENOM" id="CLU_055721_4_2_1"/>
<dbReference type="InParanoid" id="A4FV42"/>
<dbReference type="OrthoDB" id="413520at2759"/>
<dbReference type="TreeFam" id="TF313206"/>
<dbReference type="Proteomes" id="UP000009136">
    <property type="component" value="Unplaced"/>
</dbReference>
<dbReference type="GO" id="GO:0005829">
    <property type="term" value="C:cytosol"/>
    <property type="evidence" value="ECO:0000318"/>
    <property type="project" value="GO_Central"/>
</dbReference>
<dbReference type="GO" id="GO:0032991">
    <property type="term" value="C:protein-containing complex"/>
    <property type="evidence" value="ECO:0000318"/>
    <property type="project" value="GO_Central"/>
</dbReference>
<dbReference type="GO" id="GO:0016279">
    <property type="term" value="F:protein-lysine N-methyltransferase activity"/>
    <property type="evidence" value="ECO:0000250"/>
    <property type="project" value="UniProtKB"/>
</dbReference>
<dbReference type="GO" id="GO:0006479">
    <property type="term" value="P:protein methylation"/>
    <property type="evidence" value="ECO:0000250"/>
    <property type="project" value="UniProtKB"/>
</dbReference>
<dbReference type="FunFam" id="3.40.50.150:FF:000137">
    <property type="entry name" value="protein N-lysine methyltransferase METTL21A"/>
    <property type="match status" value="1"/>
</dbReference>
<dbReference type="Gene3D" id="3.40.50.150">
    <property type="entry name" value="Vaccinia Virus protein VP39"/>
    <property type="match status" value="1"/>
</dbReference>
<dbReference type="InterPro" id="IPR019410">
    <property type="entry name" value="Methyltransf_16"/>
</dbReference>
<dbReference type="InterPro" id="IPR029063">
    <property type="entry name" value="SAM-dependent_MTases_sf"/>
</dbReference>
<dbReference type="PANTHER" id="PTHR14614">
    <property type="entry name" value="HEPATOCELLULAR CARCINOMA-ASSOCIATED ANTIGEN"/>
    <property type="match status" value="1"/>
</dbReference>
<dbReference type="PANTHER" id="PTHR14614:SF14">
    <property type="entry name" value="PROTEIN N-LYSINE METHYLTRANSFERASE METTL21A"/>
    <property type="match status" value="1"/>
</dbReference>
<dbReference type="Pfam" id="PF10294">
    <property type="entry name" value="Methyltransf_16"/>
    <property type="match status" value="1"/>
</dbReference>
<dbReference type="SUPFAM" id="SSF53335">
    <property type="entry name" value="S-adenosyl-L-methionine-dependent methyltransferases"/>
    <property type="match status" value="1"/>
</dbReference>
<reference key="1">
    <citation type="submission" date="2006-09" db="EMBL/GenBank/DDBJ databases">
        <authorList>
            <consortium name="NIH - Mammalian Gene Collection (MGC) project"/>
        </authorList>
    </citation>
    <scope>NUCLEOTIDE SEQUENCE [LARGE SCALE MRNA]</scope>
    <source>
        <strain>Hereford</strain>
        <tissue>Hippocampus</tissue>
    </source>
</reference>
<evidence type="ECO:0000250" key="1">
    <source>
        <dbReference type="UniProtKB" id="Q8WXB1"/>
    </source>
</evidence>
<evidence type="ECO:0000305" key="2"/>
<sequence length="218" mass="24484">MALVPYTETAEMGLQRFHKPLATFSFANHTIQIRQDWKQLGVAAVVWDAAVVLATYLEMGTVELRGCSAVELGAGTGLVGIVAALLGAHVTITDRKVALEFLKSNVQANLPPHIQPKAVVKELTWGQNLGRFSPGEFDLILGADIIYLEETFTDLLQTLEHLCSNHSVVLLACRIRYERDYNFLAMLERQFTVSKVHYDSEKDVHIYKAQRRCLREDL</sequence>